<proteinExistence type="inferred from homology"/>
<gene>
    <name type="ordered locus">CKO_00504</name>
</gene>
<keyword id="KW-0963">Cytoplasm</keyword>
<keyword id="KW-0378">Hydrolase</keyword>
<keyword id="KW-0479">Metal-binding</keyword>
<keyword id="KW-0547">Nucleotide-binding</keyword>
<keyword id="KW-1185">Reference proteome</keyword>
<dbReference type="EC" id="3.1.3.89" evidence="1"/>
<dbReference type="EMBL" id="CP000822">
    <property type="protein sequence ID" value="ABV11660.1"/>
    <property type="molecule type" value="Genomic_DNA"/>
</dbReference>
<dbReference type="SMR" id="A8ADU7"/>
<dbReference type="STRING" id="290338.CKO_00504"/>
<dbReference type="GeneID" id="45134747"/>
<dbReference type="KEGG" id="cko:CKO_00504"/>
<dbReference type="HOGENOM" id="CLU_084784_0_0_6"/>
<dbReference type="OrthoDB" id="9812744at2"/>
<dbReference type="Proteomes" id="UP000008148">
    <property type="component" value="Chromosome"/>
</dbReference>
<dbReference type="GO" id="GO:0005737">
    <property type="term" value="C:cytoplasm"/>
    <property type="evidence" value="ECO:0007669"/>
    <property type="project" value="UniProtKB-SubCell"/>
</dbReference>
<dbReference type="GO" id="GO:0002953">
    <property type="term" value="F:5'-deoxynucleotidase activity"/>
    <property type="evidence" value="ECO:0007669"/>
    <property type="project" value="UniProtKB-EC"/>
</dbReference>
<dbReference type="GO" id="GO:0046872">
    <property type="term" value="F:metal ion binding"/>
    <property type="evidence" value="ECO:0007669"/>
    <property type="project" value="UniProtKB-KW"/>
</dbReference>
<dbReference type="GO" id="GO:0000166">
    <property type="term" value="F:nucleotide binding"/>
    <property type="evidence" value="ECO:0007669"/>
    <property type="project" value="UniProtKB-KW"/>
</dbReference>
<dbReference type="CDD" id="cd00077">
    <property type="entry name" value="HDc"/>
    <property type="match status" value="1"/>
</dbReference>
<dbReference type="FunFam" id="1.10.3210.10:FF:000002">
    <property type="entry name" value="Nucleotidase YfbR"/>
    <property type="match status" value="1"/>
</dbReference>
<dbReference type="Gene3D" id="1.10.3210.10">
    <property type="entry name" value="Hypothetical protein af1432"/>
    <property type="match status" value="1"/>
</dbReference>
<dbReference type="HAMAP" id="MF_01100">
    <property type="entry name" value="5DNU"/>
    <property type="match status" value="1"/>
</dbReference>
<dbReference type="InterPro" id="IPR003607">
    <property type="entry name" value="HD/PDEase_dom"/>
</dbReference>
<dbReference type="InterPro" id="IPR006674">
    <property type="entry name" value="HD_domain"/>
</dbReference>
<dbReference type="InterPro" id="IPR022971">
    <property type="entry name" value="YfbR"/>
</dbReference>
<dbReference type="InterPro" id="IPR039356">
    <property type="entry name" value="YfbR/HDDC2"/>
</dbReference>
<dbReference type="NCBIfam" id="NF003009">
    <property type="entry name" value="PRK03826.1"/>
    <property type="match status" value="1"/>
</dbReference>
<dbReference type="PANTHER" id="PTHR11845">
    <property type="entry name" value="5'-DEOXYNUCLEOTIDASE HDDC2"/>
    <property type="match status" value="1"/>
</dbReference>
<dbReference type="PANTHER" id="PTHR11845:SF13">
    <property type="entry name" value="5'-DEOXYNUCLEOTIDASE HDDC2"/>
    <property type="match status" value="1"/>
</dbReference>
<dbReference type="Pfam" id="PF12917">
    <property type="entry name" value="YfbR-like"/>
    <property type="match status" value="1"/>
</dbReference>
<dbReference type="SMART" id="SM00471">
    <property type="entry name" value="HDc"/>
    <property type="match status" value="1"/>
</dbReference>
<dbReference type="SUPFAM" id="SSF109604">
    <property type="entry name" value="HD-domain/PDEase-like"/>
    <property type="match status" value="1"/>
</dbReference>
<dbReference type="PROSITE" id="PS51831">
    <property type="entry name" value="HD"/>
    <property type="match status" value="1"/>
</dbReference>
<evidence type="ECO:0000255" key="1">
    <source>
        <dbReference type="HAMAP-Rule" id="MF_01100"/>
    </source>
</evidence>
<evidence type="ECO:0000255" key="2">
    <source>
        <dbReference type="PROSITE-ProRule" id="PRU01175"/>
    </source>
</evidence>
<name>5DNU_CITK8</name>
<organism>
    <name type="scientific">Citrobacter koseri (strain ATCC BAA-895 / CDC 4225-83 / SGSC4696)</name>
    <dbReference type="NCBI Taxonomy" id="290338"/>
    <lineage>
        <taxon>Bacteria</taxon>
        <taxon>Pseudomonadati</taxon>
        <taxon>Pseudomonadota</taxon>
        <taxon>Gammaproteobacteria</taxon>
        <taxon>Enterobacterales</taxon>
        <taxon>Enterobacteriaceae</taxon>
        <taxon>Citrobacter</taxon>
    </lineage>
</organism>
<protein>
    <recommendedName>
        <fullName evidence="1">5'-deoxynucleotidase CKO_00504</fullName>
        <ecNumber evidence="1">3.1.3.89</ecNumber>
    </recommendedName>
    <alternativeName>
        <fullName evidence="1">5'-deoxyribonucleotidase</fullName>
    </alternativeName>
    <alternativeName>
        <fullName evidence="1">Nucleoside 5'-monophosphate phosphohydrolase</fullName>
    </alternativeName>
</protein>
<sequence>MKQSHFFAHLSRLKLINRWPLMRNVRTENVSEHSLQVAMVAHALAAIKNRKFGGQVNAERIALLAMYHDASEVLTGDLPTPVKYFNSQIAQEYKAIEKIAQQKLVDMVPDELRDIFAPLIDEHAYSEEEKSVVKQADALCAYLKCLEELSAGNNEFLLAKTRLEKTLASRRSEEMDYFMAVFVPSFHLSLDEISQDSPL</sequence>
<comment type="function">
    <text evidence="1">Catalyzes the strictly specific dephosphorylation of 2'-deoxyribonucleoside 5'-monophosphates.</text>
</comment>
<comment type="catalytic activity">
    <reaction evidence="1">
        <text>a 2'-deoxyribonucleoside 5'-phosphate + H2O = a 2'-deoxyribonucleoside + phosphate</text>
        <dbReference type="Rhea" id="RHEA:36167"/>
        <dbReference type="ChEBI" id="CHEBI:15377"/>
        <dbReference type="ChEBI" id="CHEBI:18274"/>
        <dbReference type="ChEBI" id="CHEBI:43474"/>
        <dbReference type="ChEBI" id="CHEBI:65317"/>
        <dbReference type="EC" id="3.1.3.89"/>
    </reaction>
</comment>
<comment type="cofactor">
    <cofactor evidence="1">
        <name>a divalent metal cation</name>
        <dbReference type="ChEBI" id="CHEBI:60240"/>
    </cofactor>
</comment>
<comment type="subunit">
    <text evidence="1">Homodimer.</text>
</comment>
<comment type="subcellular location">
    <subcellularLocation>
        <location evidence="1">Cytoplasm</location>
    </subcellularLocation>
</comment>
<comment type="similarity">
    <text evidence="1">Belongs to the 5DNU family.</text>
</comment>
<accession>A8ADU7</accession>
<reference key="1">
    <citation type="submission" date="2007-08" db="EMBL/GenBank/DDBJ databases">
        <authorList>
            <consortium name="The Citrobacter koseri Genome Sequencing Project"/>
            <person name="McClelland M."/>
            <person name="Sanderson E.K."/>
            <person name="Porwollik S."/>
            <person name="Spieth J."/>
            <person name="Clifton W.S."/>
            <person name="Latreille P."/>
            <person name="Courtney L."/>
            <person name="Wang C."/>
            <person name="Pepin K."/>
            <person name="Bhonagiri V."/>
            <person name="Nash W."/>
            <person name="Johnson M."/>
            <person name="Thiruvilangam P."/>
            <person name="Wilson R."/>
        </authorList>
    </citation>
    <scope>NUCLEOTIDE SEQUENCE [LARGE SCALE GENOMIC DNA]</scope>
    <source>
        <strain>ATCC BAA-895 / CDC 4225-83 / SGSC4696</strain>
    </source>
</reference>
<feature type="chain" id="PRO_1000064947" description="5'-deoxynucleotidase CKO_00504">
    <location>
        <begin position="1"/>
        <end position="199"/>
    </location>
</feature>
<feature type="domain" description="HD" evidence="2">
    <location>
        <begin position="30"/>
        <end position="142"/>
    </location>
</feature>
<feature type="binding site" evidence="1">
    <location>
        <begin position="18"/>
        <end position="19"/>
    </location>
    <ligand>
        <name>substrate</name>
    </ligand>
</feature>
<feature type="binding site" evidence="1">
    <location>
        <position position="33"/>
    </location>
    <ligand>
        <name>a divalent metal cation</name>
        <dbReference type="ChEBI" id="CHEBI:60240"/>
    </ligand>
</feature>
<feature type="binding site" evidence="1">
    <location>
        <position position="33"/>
    </location>
    <ligand>
        <name>substrate</name>
    </ligand>
</feature>
<feature type="binding site" evidence="1">
    <location>
        <position position="68"/>
    </location>
    <ligand>
        <name>a divalent metal cation</name>
        <dbReference type="ChEBI" id="CHEBI:60240"/>
    </ligand>
</feature>
<feature type="binding site" evidence="1">
    <location>
        <position position="69"/>
    </location>
    <ligand>
        <name>a divalent metal cation</name>
        <dbReference type="ChEBI" id="CHEBI:60240"/>
    </ligand>
</feature>
<feature type="binding site" evidence="1">
    <location>
        <position position="69"/>
    </location>
    <ligand>
        <name>substrate</name>
    </ligand>
</feature>
<feature type="binding site" evidence="1">
    <location>
        <begin position="77"/>
        <end position="80"/>
    </location>
    <ligand>
        <name>substrate</name>
    </ligand>
</feature>
<feature type="binding site" evidence="1">
    <location>
        <position position="137"/>
    </location>
    <ligand>
        <name>a divalent metal cation</name>
        <dbReference type="ChEBI" id="CHEBI:60240"/>
    </ligand>
</feature>
<feature type="binding site" evidence="1">
    <location>
        <position position="137"/>
    </location>
    <ligand>
        <name>substrate</name>
    </ligand>
</feature>
<feature type="site" description="Appears to be important in orienting the phosphate for catalysis" evidence="1">
    <location>
        <position position="18"/>
    </location>
</feature>